<sequence>MLVIFLGILGLLANQVSSQLVGQLHSTENPSENELEYWCTYMECCQFCWDCQNGLCVHKLGNTTILENEYVHPCIVSRWLNKCMYDLGQGIDHVMVCSQPKHWNPYKILKKEWKENNSQNI</sequence>
<dbReference type="EMBL" id="M58155">
    <property type="protein sequence ID" value="AAA42716.1"/>
    <property type="molecule type" value="Genomic_DNA"/>
</dbReference>
<dbReference type="PIR" id="A36821">
    <property type="entry name" value="A36821"/>
</dbReference>
<dbReference type="SMR" id="P26705"/>
<dbReference type="InterPro" id="IPR004848">
    <property type="entry name" value="ASFV_fam_110"/>
</dbReference>
<dbReference type="Pfam" id="PF01639">
    <property type="entry name" value="v110"/>
    <property type="match status" value="1"/>
</dbReference>
<keyword id="KW-0244">Early protein</keyword>
<keyword id="KW-0325">Glycoprotein</keyword>
<keyword id="KW-0732">Signal</keyword>
<reference key="1">
    <citation type="journal article" date="1990" name="Virology">
        <title>Genetic variation and multigene families in African swine fever virus.</title>
        <authorList>
            <person name="de la Vega I."/>
            <person name="Vinuela E."/>
            <person name="Blasco R."/>
        </authorList>
    </citation>
    <scope>NUCLEOTIDE SEQUENCE [GENOMIC DNA]</scope>
</reference>
<feature type="signal peptide" evidence="1">
    <location>
        <begin position="1"/>
        <end position="20"/>
    </location>
</feature>
<feature type="chain" id="PRO_0000036730" description="Protein MGF 110-5L">
    <location>
        <begin position="21"/>
        <end position="121"/>
    </location>
</feature>
<feature type="glycosylation site" description="N-linked (GlcNAc...) asparagine; by host" evidence="1">
    <location>
        <position position="62"/>
    </location>
</feature>
<feature type="glycosylation site" description="N-linked (GlcNAc...) asparagine; by host" evidence="1">
    <location>
        <position position="116"/>
    </location>
</feature>
<organism>
    <name type="scientific">African swine fever virus (isolate Portugal/Lis 57/1957)</name>
    <name type="common">ASFV</name>
    <dbReference type="NCBI Taxonomy" id="10499"/>
    <lineage>
        <taxon>Viruses</taxon>
        <taxon>Varidnaviria</taxon>
        <taxon>Bamfordvirae</taxon>
        <taxon>Nucleocytoviricota</taxon>
        <taxon>Pokkesviricetes</taxon>
        <taxon>Asfuvirales</taxon>
        <taxon>Asfarviridae</taxon>
        <taxon>Asfivirus</taxon>
        <taxon>African swine fever virus</taxon>
    </lineage>
</organism>
<protein>
    <recommendedName>
        <fullName>Protein MGF 110-5L</fullName>
    </recommendedName>
</protein>
<evidence type="ECO:0000255" key="1"/>
<evidence type="ECO:0000305" key="2"/>
<name>1105L_ASFL5</name>
<gene>
    <name type="ORF">LIS121-1</name>
</gene>
<accession>P26705</accession>
<proteinExistence type="inferred from homology"/>
<organismHost>
    <name type="scientific">Ornithodoros</name>
    <name type="common">relapsing fever ticks</name>
    <dbReference type="NCBI Taxonomy" id="6937"/>
</organismHost>
<organismHost>
    <name type="scientific">Sus scrofa</name>
    <name type="common">Pig</name>
    <dbReference type="NCBI Taxonomy" id="9823"/>
</organismHost>
<comment type="induction">
    <text evidence="2">Expressed in the early phase of the viral replicative cycle.</text>
</comment>
<comment type="similarity">
    <text evidence="2">Belongs to the asfivirus MGF 110 family.</text>
</comment>